<proteinExistence type="evidence at protein level"/>
<gene>
    <name type="primary">TCEAL4</name>
    <name type="ORF">NPD017</name>
</gene>
<dbReference type="EMBL" id="AF314542">
    <property type="protein sequence ID" value="AAL40909.1"/>
    <property type="molecule type" value="mRNA"/>
</dbReference>
<dbReference type="EMBL" id="AF271783">
    <property type="protein sequence ID" value="AAG44794.1"/>
    <property type="molecule type" value="mRNA"/>
</dbReference>
<dbReference type="EMBL" id="AK024827">
    <property type="protein sequence ID" value="BAB15023.1"/>
    <property type="molecule type" value="mRNA"/>
</dbReference>
<dbReference type="EMBL" id="Z73965">
    <property type="status" value="NOT_ANNOTATED_CDS"/>
    <property type="molecule type" value="Genomic_DNA"/>
</dbReference>
<dbReference type="EMBL" id="BC012296">
    <property type="protein sequence ID" value="AAH12296.1"/>
    <property type="molecule type" value="mRNA"/>
</dbReference>
<dbReference type="CCDS" id="CCDS14510.2">
    <molecule id="Q96EI5-1"/>
</dbReference>
<dbReference type="CCDS" id="CCDS76004.1">
    <molecule id="Q96EI5-2"/>
</dbReference>
<dbReference type="RefSeq" id="NP_001006936.1">
    <molecule id="Q96EI5-1"/>
    <property type="nucleotide sequence ID" value="NM_001006935.3"/>
</dbReference>
<dbReference type="RefSeq" id="NP_001006938.1">
    <molecule id="Q96EI5-1"/>
    <property type="nucleotide sequence ID" value="NM_001006937.3"/>
</dbReference>
<dbReference type="RefSeq" id="NP_001287830.1">
    <molecule id="Q96EI5-2"/>
    <property type="nucleotide sequence ID" value="NM_001300901.2"/>
</dbReference>
<dbReference type="RefSeq" id="NP_001292769.1">
    <molecule id="Q96EI5-1"/>
    <property type="nucleotide sequence ID" value="NM_001305840.2"/>
</dbReference>
<dbReference type="RefSeq" id="NP_001292770.1">
    <molecule id="Q96EI5-1"/>
    <property type="nucleotide sequence ID" value="NM_001305841.2"/>
</dbReference>
<dbReference type="RefSeq" id="NP_001292771.1">
    <molecule id="Q96EI5-1"/>
    <property type="nucleotide sequence ID" value="NM_001305842.2"/>
</dbReference>
<dbReference type="RefSeq" id="NP_079139.4">
    <molecule id="Q96EI5-1"/>
    <property type="nucleotide sequence ID" value="NM_024863.5"/>
</dbReference>
<dbReference type="RefSeq" id="XP_016885346.1">
    <property type="nucleotide sequence ID" value="XM_017029857.1"/>
</dbReference>
<dbReference type="BioGRID" id="122998">
    <property type="interactions" value="51"/>
</dbReference>
<dbReference type="FunCoup" id="Q96EI5">
    <property type="interactions" value="79"/>
</dbReference>
<dbReference type="IntAct" id="Q96EI5">
    <property type="interactions" value="19"/>
</dbReference>
<dbReference type="STRING" id="9606.ENSP00000361712"/>
<dbReference type="GlyGen" id="Q96EI5">
    <property type="glycosylation" value="1 site, 1 O-linked glycan (1 site)"/>
</dbReference>
<dbReference type="iPTMnet" id="Q96EI5"/>
<dbReference type="MetOSite" id="Q96EI5"/>
<dbReference type="PhosphoSitePlus" id="Q96EI5"/>
<dbReference type="BioMuta" id="TCEAL4"/>
<dbReference type="DMDM" id="108935938"/>
<dbReference type="jPOST" id="Q96EI5"/>
<dbReference type="MassIVE" id="Q96EI5"/>
<dbReference type="PaxDb" id="9606-ENSP00000361712"/>
<dbReference type="PeptideAtlas" id="Q96EI5"/>
<dbReference type="ProteomicsDB" id="76411">
    <molecule id="Q96EI5-1"/>
</dbReference>
<dbReference type="ProteomicsDB" id="76412">
    <molecule id="Q96EI5-2"/>
</dbReference>
<dbReference type="Pumba" id="Q96EI5"/>
<dbReference type="Antibodypedia" id="35108">
    <property type="antibodies" value="72 antibodies from 22 providers"/>
</dbReference>
<dbReference type="DNASU" id="79921"/>
<dbReference type="Ensembl" id="ENST00000372629.4">
    <molecule id="Q96EI5-2"/>
    <property type="protein sequence ID" value="ENSP00000361712.4"/>
    <property type="gene ID" value="ENSG00000133142.19"/>
</dbReference>
<dbReference type="Ensembl" id="ENST00000415568.2">
    <molecule id="Q96EI5-1"/>
    <property type="protein sequence ID" value="ENSP00000415564.2"/>
    <property type="gene ID" value="ENSG00000133142.19"/>
</dbReference>
<dbReference type="Ensembl" id="ENST00000468024.5">
    <molecule id="Q96EI5-1"/>
    <property type="protein sequence ID" value="ENSP00000421857.1"/>
    <property type="gene ID" value="ENSG00000133142.19"/>
</dbReference>
<dbReference type="Ensembl" id="ENST00000472484.6">
    <molecule id="Q96EI5-1"/>
    <property type="protein sequence ID" value="ENSP00000421156.1"/>
    <property type="gene ID" value="ENSG00000133142.19"/>
</dbReference>
<dbReference type="Ensembl" id="ENST00000472745.1">
    <molecule id="Q96EI5-1"/>
    <property type="protein sequence ID" value="ENSP00000424314.1"/>
    <property type="gene ID" value="ENSG00000133142.19"/>
</dbReference>
<dbReference type="Ensembl" id="ENST00000494801.5">
    <molecule id="Q96EI5-1"/>
    <property type="protein sequence ID" value="ENSP00000427494.1"/>
    <property type="gene ID" value="ENSG00000133142.19"/>
</dbReference>
<dbReference type="GeneID" id="79921"/>
<dbReference type="KEGG" id="hsa:79921"/>
<dbReference type="MANE-Select" id="ENST00000472484.6">
    <property type="protein sequence ID" value="ENSP00000421156.1"/>
    <property type="RefSeq nucleotide sequence ID" value="NM_001006935.3"/>
    <property type="RefSeq protein sequence ID" value="NP_001006936.1"/>
</dbReference>
<dbReference type="UCSC" id="uc004ekl.4">
    <molecule id="Q96EI5-1"/>
    <property type="organism name" value="human"/>
</dbReference>
<dbReference type="AGR" id="HGNC:26121"/>
<dbReference type="CTD" id="79921"/>
<dbReference type="DisGeNET" id="79921"/>
<dbReference type="GeneCards" id="TCEAL4"/>
<dbReference type="HGNC" id="HGNC:26121">
    <property type="gene designation" value="TCEAL4"/>
</dbReference>
<dbReference type="HPA" id="ENSG00000133142">
    <property type="expression patterns" value="Low tissue specificity"/>
</dbReference>
<dbReference type="neXtProt" id="NX_Q96EI5"/>
<dbReference type="OpenTargets" id="ENSG00000133142"/>
<dbReference type="PharmGKB" id="PA128394724"/>
<dbReference type="VEuPathDB" id="HostDB:ENSG00000133142"/>
<dbReference type="eggNOG" id="ENOG502SXKH">
    <property type="taxonomic scope" value="Eukaryota"/>
</dbReference>
<dbReference type="GeneTree" id="ENSGT00950000183164"/>
<dbReference type="HOGENOM" id="CLU_078412_0_0_1"/>
<dbReference type="InParanoid" id="Q96EI5"/>
<dbReference type="OMA" id="QGEMEYK"/>
<dbReference type="OrthoDB" id="9834312at2759"/>
<dbReference type="PAN-GO" id="Q96EI5">
    <property type="GO annotations" value="2 GO annotations based on evolutionary models"/>
</dbReference>
<dbReference type="PhylomeDB" id="Q96EI5"/>
<dbReference type="TreeFam" id="TF336871"/>
<dbReference type="PathwayCommons" id="Q96EI5"/>
<dbReference type="SignaLink" id="Q96EI5"/>
<dbReference type="BioGRID-ORCS" id="79921">
    <property type="hits" value="24 hits in 785 CRISPR screens"/>
</dbReference>
<dbReference type="ChiTaRS" id="TCEAL4">
    <property type="organism name" value="human"/>
</dbReference>
<dbReference type="GeneWiki" id="TCEAL4"/>
<dbReference type="GenomeRNAi" id="79921"/>
<dbReference type="Pharos" id="Q96EI5">
    <property type="development level" value="Tdark"/>
</dbReference>
<dbReference type="PRO" id="PR:Q96EI5"/>
<dbReference type="Proteomes" id="UP000005640">
    <property type="component" value="Chromosome X"/>
</dbReference>
<dbReference type="RNAct" id="Q96EI5">
    <property type="molecule type" value="protein"/>
</dbReference>
<dbReference type="Bgee" id="ENSG00000133142">
    <property type="expression patterns" value="Expressed in right ovary and 209 other cell types or tissues"/>
</dbReference>
<dbReference type="ExpressionAtlas" id="Q96EI5">
    <property type="expression patterns" value="baseline and differential"/>
</dbReference>
<dbReference type="GO" id="GO:0005634">
    <property type="term" value="C:nucleus"/>
    <property type="evidence" value="ECO:0007669"/>
    <property type="project" value="UniProtKB-SubCell"/>
</dbReference>
<dbReference type="InterPro" id="IPR021156">
    <property type="entry name" value="TF_A-like/BEX"/>
</dbReference>
<dbReference type="Pfam" id="PF04538">
    <property type="entry name" value="BEX"/>
    <property type="match status" value="1"/>
</dbReference>
<comment type="function">
    <text>May be involved in transcriptional regulation.</text>
</comment>
<comment type="interaction">
    <interactant intactId="EBI-2511291">
        <id>Q96EI5</id>
    </interactant>
    <interactant intactId="EBI-988601">
        <id>O43933</id>
        <label>PEX1</label>
    </interactant>
    <organismsDiffer>false</organismsDiffer>
    <experiments>3</experiments>
</comment>
<comment type="interaction">
    <interactant intactId="EBI-2511291">
        <id>Q96EI5</id>
    </interactant>
    <interactant intactId="EBI-720609">
        <id>O76024</id>
        <label>WFS1</label>
    </interactant>
    <organismsDiffer>false</organismsDiffer>
    <experiments>3</experiments>
</comment>
<comment type="subcellular location">
    <subcellularLocation>
        <location evidence="3">Nucleus</location>
    </subcellularLocation>
</comment>
<comment type="alternative products">
    <event type="alternative splicing"/>
    <isoform>
        <id>Q96EI5-1</id>
        <name>1</name>
        <sequence type="displayed"/>
    </isoform>
    <isoform>
        <id>Q96EI5-2</id>
        <name>2</name>
        <sequence type="described" ref="VSP_019109"/>
    </isoform>
</comment>
<comment type="similarity">
    <text evidence="3">Belongs to the TFS-II family. TFA subfamily.</text>
</comment>
<evidence type="ECO:0000256" key="1">
    <source>
        <dbReference type="SAM" id="MobiDB-lite"/>
    </source>
</evidence>
<evidence type="ECO:0000303" key="2">
    <source>
    </source>
</evidence>
<evidence type="ECO:0000305" key="3"/>
<evidence type="ECO:0007744" key="4">
    <source>
    </source>
</evidence>
<evidence type="ECO:0007744" key="5">
    <source>
    </source>
</evidence>
<evidence type="ECO:0007744" key="6">
    <source>
    </source>
</evidence>
<reference key="1">
    <citation type="journal article" date="2001" name="Zhongguo Yi Xue Ke Xue Yuan Xue Bao">
        <title>Cloning of human B lymphocyte activation-related novel gene.</title>
        <authorList>
            <person name="Lu X.W."/>
            <person name="Yin J.Y."/>
            <person name="Cui L.X."/>
        </authorList>
    </citation>
    <scope>NUCLEOTIDE SEQUENCE [MRNA] (ISOFORM 2)</scope>
</reference>
<reference key="2">
    <citation type="submission" date="2000-05" db="EMBL/GenBank/DDBJ databases">
        <authorList>
            <person name="Xu X."/>
            <person name="Yang Y."/>
            <person name="Gao G."/>
            <person name="Xiao H."/>
            <person name="Chen Z."/>
            <person name="Han Z."/>
        </authorList>
    </citation>
    <scope>NUCLEOTIDE SEQUENCE [LARGE SCALE MRNA] (ISOFORM 1)</scope>
    <source>
        <tissue>Pituitary</tissue>
    </source>
</reference>
<reference key="3">
    <citation type="journal article" date="2004" name="Nat. Genet.">
        <title>Complete sequencing and characterization of 21,243 full-length human cDNAs.</title>
        <authorList>
            <person name="Ota T."/>
            <person name="Suzuki Y."/>
            <person name="Nishikawa T."/>
            <person name="Otsuki T."/>
            <person name="Sugiyama T."/>
            <person name="Irie R."/>
            <person name="Wakamatsu A."/>
            <person name="Hayashi K."/>
            <person name="Sato H."/>
            <person name="Nagai K."/>
            <person name="Kimura K."/>
            <person name="Makita H."/>
            <person name="Sekine M."/>
            <person name="Obayashi M."/>
            <person name="Nishi T."/>
            <person name="Shibahara T."/>
            <person name="Tanaka T."/>
            <person name="Ishii S."/>
            <person name="Yamamoto J."/>
            <person name="Saito K."/>
            <person name="Kawai Y."/>
            <person name="Isono Y."/>
            <person name="Nakamura Y."/>
            <person name="Nagahari K."/>
            <person name="Murakami K."/>
            <person name="Yasuda T."/>
            <person name="Iwayanagi T."/>
            <person name="Wagatsuma M."/>
            <person name="Shiratori A."/>
            <person name="Sudo H."/>
            <person name="Hosoiri T."/>
            <person name="Kaku Y."/>
            <person name="Kodaira H."/>
            <person name="Kondo H."/>
            <person name="Sugawara M."/>
            <person name="Takahashi M."/>
            <person name="Kanda K."/>
            <person name="Yokoi T."/>
            <person name="Furuya T."/>
            <person name="Kikkawa E."/>
            <person name="Omura Y."/>
            <person name="Abe K."/>
            <person name="Kamihara K."/>
            <person name="Katsuta N."/>
            <person name="Sato K."/>
            <person name="Tanikawa M."/>
            <person name="Yamazaki M."/>
            <person name="Ninomiya K."/>
            <person name="Ishibashi T."/>
            <person name="Yamashita H."/>
            <person name="Murakawa K."/>
            <person name="Fujimori K."/>
            <person name="Tanai H."/>
            <person name="Kimata M."/>
            <person name="Watanabe M."/>
            <person name="Hiraoka S."/>
            <person name="Chiba Y."/>
            <person name="Ishida S."/>
            <person name="Ono Y."/>
            <person name="Takiguchi S."/>
            <person name="Watanabe S."/>
            <person name="Yosida M."/>
            <person name="Hotuta T."/>
            <person name="Kusano J."/>
            <person name="Kanehori K."/>
            <person name="Takahashi-Fujii A."/>
            <person name="Hara H."/>
            <person name="Tanase T.-O."/>
            <person name="Nomura Y."/>
            <person name="Togiya S."/>
            <person name="Komai F."/>
            <person name="Hara R."/>
            <person name="Takeuchi K."/>
            <person name="Arita M."/>
            <person name="Imose N."/>
            <person name="Musashino K."/>
            <person name="Yuuki H."/>
            <person name="Oshima A."/>
            <person name="Sasaki N."/>
            <person name="Aotsuka S."/>
            <person name="Yoshikawa Y."/>
            <person name="Matsunawa H."/>
            <person name="Ichihara T."/>
            <person name="Shiohata N."/>
            <person name="Sano S."/>
            <person name="Moriya S."/>
            <person name="Momiyama H."/>
            <person name="Satoh N."/>
            <person name="Takami S."/>
            <person name="Terashima Y."/>
            <person name="Suzuki O."/>
            <person name="Nakagawa S."/>
            <person name="Senoh A."/>
            <person name="Mizoguchi H."/>
            <person name="Goto Y."/>
            <person name="Shimizu F."/>
            <person name="Wakebe H."/>
            <person name="Hishigaki H."/>
            <person name="Watanabe T."/>
            <person name="Sugiyama A."/>
            <person name="Takemoto M."/>
            <person name="Kawakami B."/>
            <person name="Yamazaki M."/>
            <person name="Watanabe K."/>
            <person name="Kumagai A."/>
            <person name="Itakura S."/>
            <person name="Fukuzumi Y."/>
            <person name="Fujimori Y."/>
            <person name="Komiyama M."/>
            <person name="Tashiro H."/>
            <person name="Tanigami A."/>
            <person name="Fujiwara T."/>
            <person name="Ono T."/>
            <person name="Yamada K."/>
            <person name="Fujii Y."/>
            <person name="Ozaki K."/>
            <person name="Hirao M."/>
            <person name="Ohmori Y."/>
            <person name="Kawabata A."/>
            <person name="Hikiji T."/>
            <person name="Kobatake N."/>
            <person name="Inagaki H."/>
            <person name="Ikema Y."/>
            <person name="Okamoto S."/>
            <person name="Okitani R."/>
            <person name="Kawakami T."/>
            <person name="Noguchi S."/>
            <person name="Itoh T."/>
            <person name="Shigeta K."/>
            <person name="Senba T."/>
            <person name="Matsumura K."/>
            <person name="Nakajima Y."/>
            <person name="Mizuno T."/>
            <person name="Morinaga M."/>
            <person name="Sasaki M."/>
            <person name="Togashi T."/>
            <person name="Oyama M."/>
            <person name="Hata H."/>
            <person name="Watanabe M."/>
            <person name="Komatsu T."/>
            <person name="Mizushima-Sugano J."/>
            <person name="Satoh T."/>
            <person name="Shirai Y."/>
            <person name="Takahashi Y."/>
            <person name="Nakagawa K."/>
            <person name="Okumura K."/>
            <person name="Nagase T."/>
            <person name="Nomura N."/>
            <person name="Kikuchi H."/>
            <person name="Masuho Y."/>
            <person name="Yamashita R."/>
            <person name="Nakai K."/>
            <person name="Yada T."/>
            <person name="Nakamura Y."/>
            <person name="Ohara O."/>
            <person name="Isogai T."/>
            <person name="Sugano S."/>
        </authorList>
    </citation>
    <scope>NUCLEOTIDE SEQUENCE [LARGE SCALE MRNA] (ISOFORM 1)</scope>
    <source>
        <tissue>Smooth muscle</tissue>
    </source>
</reference>
<reference key="4">
    <citation type="journal article" date="2005" name="Nature">
        <title>The DNA sequence of the human X chromosome.</title>
        <authorList>
            <person name="Ross M.T."/>
            <person name="Grafham D.V."/>
            <person name="Coffey A.J."/>
            <person name="Scherer S."/>
            <person name="McLay K."/>
            <person name="Muzny D."/>
            <person name="Platzer M."/>
            <person name="Howell G.R."/>
            <person name="Burrows C."/>
            <person name="Bird C.P."/>
            <person name="Frankish A."/>
            <person name="Lovell F.L."/>
            <person name="Howe K.L."/>
            <person name="Ashurst J.L."/>
            <person name="Fulton R.S."/>
            <person name="Sudbrak R."/>
            <person name="Wen G."/>
            <person name="Jones M.C."/>
            <person name="Hurles M.E."/>
            <person name="Andrews T.D."/>
            <person name="Scott C.E."/>
            <person name="Searle S."/>
            <person name="Ramser J."/>
            <person name="Whittaker A."/>
            <person name="Deadman R."/>
            <person name="Carter N.P."/>
            <person name="Hunt S.E."/>
            <person name="Chen R."/>
            <person name="Cree A."/>
            <person name="Gunaratne P."/>
            <person name="Havlak P."/>
            <person name="Hodgson A."/>
            <person name="Metzker M.L."/>
            <person name="Richards S."/>
            <person name="Scott G."/>
            <person name="Steffen D."/>
            <person name="Sodergren E."/>
            <person name="Wheeler D.A."/>
            <person name="Worley K.C."/>
            <person name="Ainscough R."/>
            <person name="Ambrose K.D."/>
            <person name="Ansari-Lari M.A."/>
            <person name="Aradhya S."/>
            <person name="Ashwell R.I."/>
            <person name="Babbage A.K."/>
            <person name="Bagguley C.L."/>
            <person name="Ballabio A."/>
            <person name="Banerjee R."/>
            <person name="Barker G.E."/>
            <person name="Barlow K.F."/>
            <person name="Barrett I.P."/>
            <person name="Bates K.N."/>
            <person name="Beare D.M."/>
            <person name="Beasley H."/>
            <person name="Beasley O."/>
            <person name="Beck A."/>
            <person name="Bethel G."/>
            <person name="Blechschmidt K."/>
            <person name="Brady N."/>
            <person name="Bray-Allen S."/>
            <person name="Bridgeman A.M."/>
            <person name="Brown A.J."/>
            <person name="Brown M.J."/>
            <person name="Bonnin D."/>
            <person name="Bruford E.A."/>
            <person name="Buhay C."/>
            <person name="Burch P."/>
            <person name="Burford D."/>
            <person name="Burgess J."/>
            <person name="Burrill W."/>
            <person name="Burton J."/>
            <person name="Bye J.M."/>
            <person name="Carder C."/>
            <person name="Carrel L."/>
            <person name="Chako J."/>
            <person name="Chapman J.C."/>
            <person name="Chavez D."/>
            <person name="Chen E."/>
            <person name="Chen G."/>
            <person name="Chen Y."/>
            <person name="Chen Z."/>
            <person name="Chinault C."/>
            <person name="Ciccodicola A."/>
            <person name="Clark S.Y."/>
            <person name="Clarke G."/>
            <person name="Clee C.M."/>
            <person name="Clegg S."/>
            <person name="Clerc-Blankenburg K."/>
            <person name="Clifford K."/>
            <person name="Cobley V."/>
            <person name="Cole C.G."/>
            <person name="Conquer J.S."/>
            <person name="Corby N."/>
            <person name="Connor R.E."/>
            <person name="David R."/>
            <person name="Davies J."/>
            <person name="Davis C."/>
            <person name="Davis J."/>
            <person name="Delgado O."/>
            <person name="Deshazo D."/>
            <person name="Dhami P."/>
            <person name="Ding Y."/>
            <person name="Dinh H."/>
            <person name="Dodsworth S."/>
            <person name="Draper H."/>
            <person name="Dugan-Rocha S."/>
            <person name="Dunham A."/>
            <person name="Dunn M."/>
            <person name="Durbin K.J."/>
            <person name="Dutta I."/>
            <person name="Eades T."/>
            <person name="Ellwood M."/>
            <person name="Emery-Cohen A."/>
            <person name="Errington H."/>
            <person name="Evans K.L."/>
            <person name="Faulkner L."/>
            <person name="Francis F."/>
            <person name="Frankland J."/>
            <person name="Fraser A.E."/>
            <person name="Galgoczy P."/>
            <person name="Gilbert J."/>
            <person name="Gill R."/>
            <person name="Gloeckner G."/>
            <person name="Gregory S.G."/>
            <person name="Gribble S."/>
            <person name="Griffiths C."/>
            <person name="Grocock R."/>
            <person name="Gu Y."/>
            <person name="Gwilliam R."/>
            <person name="Hamilton C."/>
            <person name="Hart E.A."/>
            <person name="Hawes A."/>
            <person name="Heath P.D."/>
            <person name="Heitmann K."/>
            <person name="Hennig S."/>
            <person name="Hernandez J."/>
            <person name="Hinzmann B."/>
            <person name="Ho S."/>
            <person name="Hoffs M."/>
            <person name="Howden P.J."/>
            <person name="Huckle E.J."/>
            <person name="Hume J."/>
            <person name="Hunt P.J."/>
            <person name="Hunt A.R."/>
            <person name="Isherwood J."/>
            <person name="Jacob L."/>
            <person name="Johnson D."/>
            <person name="Jones S."/>
            <person name="de Jong P.J."/>
            <person name="Joseph S.S."/>
            <person name="Keenan S."/>
            <person name="Kelly S."/>
            <person name="Kershaw J.K."/>
            <person name="Khan Z."/>
            <person name="Kioschis P."/>
            <person name="Klages S."/>
            <person name="Knights A.J."/>
            <person name="Kosiura A."/>
            <person name="Kovar-Smith C."/>
            <person name="Laird G.K."/>
            <person name="Langford C."/>
            <person name="Lawlor S."/>
            <person name="Leversha M."/>
            <person name="Lewis L."/>
            <person name="Liu W."/>
            <person name="Lloyd C."/>
            <person name="Lloyd D.M."/>
            <person name="Loulseged H."/>
            <person name="Loveland J.E."/>
            <person name="Lovell J.D."/>
            <person name="Lozado R."/>
            <person name="Lu J."/>
            <person name="Lyne R."/>
            <person name="Ma J."/>
            <person name="Maheshwari M."/>
            <person name="Matthews L.H."/>
            <person name="McDowall J."/>
            <person name="McLaren S."/>
            <person name="McMurray A."/>
            <person name="Meidl P."/>
            <person name="Meitinger T."/>
            <person name="Milne S."/>
            <person name="Miner G."/>
            <person name="Mistry S.L."/>
            <person name="Morgan M."/>
            <person name="Morris S."/>
            <person name="Mueller I."/>
            <person name="Mullikin J.C."/>
            <person name="Nguyen N."/>
            <person name="Nordsiek G."/>
            <person name="Nyakatura G."/>
            <person name="O'dell C.N."/>
            <person name="Okwuonu G."/>
            <person name="Palmer S."/>
            <person name="Pandian R."/>
            <person name="Parker D."/>
            <person name="Parrish J."/>
            <person name="Pasternak S."/>
            <person name="Patel D."/>
            <person name="Pearce A.V."/>
            <person name="Pearson D.M."/>
            <person name="Pelan S.E."/>
            <person name="Perez L."/>
            <person name="Porter K.M."/>
            <person name="Ramsey Y."/>
            <person name="Reichwald K."/>
            <person name="Rhodes S."/>
            <person name="Ridler K.A."/>
            <person name="Schlessinger D."/>
            <person name="Schueler M.G."/>
            <person name="Sehra H.K."/>
            <person name="Shaw-Smith C."/>
            <person name="Shen H."/>
            <person name="Sheridan E.M."/>
            <person name="Shownkeen R."/>
            <person name="Skuce C.D."/>
            <person name="Smith M.L."/>
            <person name="Sotheran E.C."/>
            <person name="Steingruber H.E."/>
            <person name="Steward C.A."/>
            <person name="Storey R."/>
            <person name="Swann R.M."/>
            <person name="Swarbreck D."/>
            <person name="Tabor P.E."/>
            <person name="Taudien S."/>
            <person name="Taylor T."/>
            <person name="Teague B."/>
            <person name="Thomas K."/>
            <person name="Thorpe A."/>
            <person name="Timms K."/>
            <person name="Tracey A."/>
            <person name="Trevanion S."/>
            <person name="Tromans A.C."/>
            <person name="d'Urso M."/>
            <person name="Verduzco D."/>
            <person name="Villasana D."/>
            <person name="Waldron L."/>
            <person name="Wall M."/>
            <person name="Wang Q."/>
            <person name="Warren J."/>
            <person name="Warry G.L."/>
            <person name="Wei X."/>
            <person name="West A."/>
            <person name="Whitehead S.L."/>
            <person name="Whiteley M.N."/>
            <person name="Wilkinson J.E."/>
            <person name="Willey D.L."/>
            <person name="Williams G."/>
            <person name="Williams L."/>
            <person name="Williamson A."/>
            <person name="Williamson H."/>
            <person name="Wilming L."/>
            <person name="Woodmansey R.L."/>
            <person name="Wray P.W."/>
            <person name="Yen J."/>
            <person name="Zhang J."/>
            <person name="Zhou J."/>
            <person name="Zoghbi H."/>
            <person name="Zorilla S."/>
            <person name="Buck D."/>
            <person name="Reinhardt R."/>
            <person name="Poustka A."/>
            <person name="Rosenthal A."/>
            <person name="Lehrach H."/>
            <person name="Meindl A."/>
            <person name="Minx P.J."/>
            <person name="Hillier L.W."/>
            <person name="Willard H.F."/>
            <person name="Wilson R.K."/>
            <person name="Waterston R.H."/>
            <person name="Rice C.M."/>
            <person name="Vaudin M."/>
            <person name="Coulson A."/>
            <person name="Nelson D.L."/>
            <person name="Weinstock G."/>
            <person name="Sulston J.E."/>
            <person name="Durbin R.M."/>
            <person name="Hubbard T."/>
            <person name="Gibbs R.A."/>
            <person name="Beck S."/>
            <person name="Rogers J."/>
            <person name="Bentley D.R."/>
        </authorList>
    </citation>
    <scope>NUCLEOTIDE SEQUENCE [LARGE SCALE GENOMIC DNA]</scope>
</reference>
<reference key="5">
    <citation type="journal article" date="2004" name="Genome Res.">
        <title>The status, quality, and expansion of the NIH full-length cDNA project: the Mammalian Gene Collection (MGC).</title>
        <authorList>
            <consortium name="The MGC Project Team"/>
        </authorList>
    </citation>
    <scope>NUCLEOTIDE SEQUENCE [LARGE SCALE MRNA] (ISOFORM 1)</scope>
    <source>
        <tissue>Placenta</tissue>
    </source>
</reference>
<reference key="6">
    <citation type="journal article" date="2008" name="Proc. Natl. Acad. Sci. U.S.A.">
        <title>A quantitative atlas of mitotic phosphorylation.</title>
        <authorList>
            <person name="Dephoure N."/>
            <person name="Zhou C."/>
            <person name="Villen J."/>
            <person name="Beausoleil S.A."/>
            <person name="Bakalarski C.E."/>
            <person name="Elledge S.J."/>
            <person name="Gygi S.P."/>
        </authorList>
    </citation>
    <scope>IDENTIFICATION BY MASS SPECTROMETRY [LARGE SCALE ANALYSIS]</scope>
    <source>
        <tissue>Cervix carcinoma</tissue>
    </source>
</reference>
<reference key="7">
    <citation type="journal article" date="2009" name="Anal. Chem.">
        <title>Lys-N and trypsin cover complementary parts of the phosphoproteome in a refined SCX-based approach.</title>
        <authorList>
            <person name="Gauci S."/>
            <person name="Helbig A.O."/>
            <person name="Slijper M."/>
            <person name="Krijgsveld J."/>
            <person name="Heck A.J."/>
            <person name="Mohammed S."/>
        </authorList>
    </citation>
    <scope>IDENTIFICATION BY MASS SPECTROMETRY [LARGE SCALE ANALYSIS]</scope>
</reference>
<reference key="8">
    <citation type="journal article" date="2011" name="BMC Syst. Biol.">
        <title>Initial characterization of the human central proteome.</title>
        <authorList>
            <person name="Burkard T.R."/>
            <person name="Planyavsky M."/>
            <person name="Kaupe I."/>
            <person name="Breitwieser F.P."/>
            <person name="Buerckstuemmer T."/>
            <person name="Bennett K.L."/>
            <person name="Superti-Furga G."/>
            <person name="Colinge J."/>
        </authorList>
    </citation>
    <scope>IDENTIFICATION BY MASS SPECTROMETRY [LARGE SCALE ANALYSIS]</scope>
</reference>
<reference key="9">
    <citation type="journal article" date="2012" name="Proc. Natl. Acad. Sci. U.S.A.">
        <title>N-terminal acetylome analyses and functional insights of the N-terminal acetyltransferase NatB.</title>
        <authorList>
            <person name="Van Damme P."/>
            <person name="Lasa M."/>
            <person name="Polevoda B."/>
            <person name="Gazquez C."/>
            <person name="Elosegui-Artola A."/>
            <person name="Kim D.S."/>
            <person name="De Juan-Pardo E."/>
            <person name="Demeyer K."/>
            <person name="Hole K."/>
            <person name="Larrea E."/>
            <person name="Timmerman E."/>
            <person name="Prieto J."/>
            <person name="Arnesen T."/>
            <person name="Sherman F."/>
            <person name="Gevaert K."/>
            <person name="Aldabe R."/>
        </authorList>
    </citation>
    <scope>ACETYLATION [LARGE SCALE ANALYSIS] AT MET-1</scope>
    <scope>IDENTIFICATION BY MASS SPECTROMETRY [LARGE SCALE ANALYSIS]</scope>
</reference>
<reference key="10">
    <citation type="journal article" date="2013" name="J. Proteome Res.">
        <title>Toward a comprehensive characterization of a human cancer cell phosphoproteome.</title>
        <authorList>
            <person name="Zhou H."/>
            <person name="Di Palma S."/>
            <person name="Preisinger C."/>
            <person name="Peng M."/>
            <person name="Polat A.N."/>
            <person name="Heck A.J."/>
            <person name="Mohammed S."/>
        </authorList>
    </citation>
    <scope>PHOSPHORYLATION [LARGE SCALE ANALYSIS] AT SER-6 AND SER-88</scope>
    <scope>IDENTIFICATION BY MASS SPECTROMETRY [LARGE SCALE ANALYSIS]</scope>
    <source>
        <tissue>Cervix carcinoma</tissue>
    </source>
</reference>
<reference key="11">
    <citation type="journal article" date="2014" name="J. Proteomics">
        <title>An enzyme assisted RP-RPLC approach for in-depth analysis of human liver phosphoproteome.</title>
        <authorList>
            <person name="Bian Y."/>
            <person name="Song C."/>
            <person name="Cheng K."/>
            <person name="Dong M."/>
            <person name="Wang F."/>
            <person name="Huang J."/>
            <person name="Sun D."/>
            <person name="Wang L."/>
            <person name="Ye M."/>
            <person name="Zou H."/>
        </authorList>
    </citation>
    <scope>PHOSPHORYLATION [LARGE SCALE ANALYSIS] AT SER-102</scope>
    <scope>IDENTIFICATION BY MASS SPECTROMETRY [LARGE SCALE ANALYSIS]</scope>
    <source>
        <tissue>Liver</tissue>
    </source>
</reference>
<keyword id="KW-0007">Acetylation</keyword>
<keyword id="KW-0025">Alternative splicing</keyword>
<keyword id="KW-0539">Nucleus</keyword>
<keyword id="KW-0597">Phosphoprotein</keyword>
<keyword id="KW-1267">Proteomics identification</keyword>
<keyword id="KW-1185">Reference proteome</keyword>
<keyword id="KW-0804">Transcription</keyword>
<keyword id="KW-0805">Transcription regulation</keyword>
<sequence length="215" mass="24647">MEKLYSENEGMASNQGKMENEEQPQDERKPEVTCTLEDKKLENEGKTENKGKTGDEEMLKDKGKPESEGEAKEGKSEREGESEMEGGSEREGKPEIEGKPESEGEPGSETRAAGKRPAEDDVPRKAKRKTNKGLAHYLKEYKEAIHDMNFSNEDMIREFDNMAKVQDEKRKSKQKLGAFLWMQRNLQDPFYPRGPREFRGGCRAPRRDIEDIPYV</sequence>
<accession>Q96EI5</accession>
<accession>Q8WY12</accession>
<accession>Q9H2H1</accession>
<accession>Q9H775</accession>
<feature type="chain" id="PRO_0000239209" description="Transcription elongation factor A protein-like 4">
    <location>
        <begin position="1"/>
        <end position="215"/>
    </location>
</feature>
<feature type="region of interest" description="Disordered" evidence="1">
    <location>
        <begin position="1"/>
        <end position="133"/>
    </location>
</feature>
<feature type="compositionally biased region" description="Basic and acidic residues" evidence="1">
    <location>
        <begin position="25"/>
        <end position="102"/>
    </location>
</feature>
<feature type="modified residue" description="N-acetylmethionine" evidence="4">
    <location>
        <position position="1"/>
    </location>
</feature>
<feature type="modified residue" description="Phosphoserine" evidence="5">
    <location>
        <position position="6"/>
    </location>
</feature>
<feature type="modified residue" description="Phosphoserine" evidence="5">
    <location>
        <position position="88"/>
    </location>
</feature>
<feature type="modified residue" description="Phosphoserine" evidence="6">
    <location>
        <position position="102"/>
    </location>
</feature>
<feature type="splice variant" id="VSP_019109" description="In isoform 2." evidence="2">
    <original>M</original>
    <variation>MPAGGQAPQLTPVIPAFWEARGLPNSKGRDKVHICQCEEWKGHISYVERDITTSEIKSLPQVSVRAFHAASGTLEWRKGNGYGRGKGWGWGRVESREAGPSVDRDGGLRVCCSQRSAKPEKEEQPVQNPRRSVKDRKRRGNLDM</variation>
    <location>
        <position position="1"/>
    </location>
</feature>
<feature type="sequence conflict" description="In Ref. 5; AAH12296." evidence="3" ref="5">
    <original>K</original>
    <variation>T</variation>
    <location>
        <position position="132"/>
    </location>
</feature>
<feature type="sequence conflict" description="In Ref. 3; BAB15023." evidence="3" ref="3">
    <original>R</original>
    <variation>G</variation>
    <location>
        <position position="157"/>
    </location>
</feature>
<protein>
    <recommendedName>
        <fullName>Transcription elongation factor A protein-like 4</fullName>
        <shortName>TCEA-like protein 4</shortName>
    </recommendedName>
    <alternativeName>
        <fullName>Transcription elongation factor S-II protein-like 4</fullName>
    </alternativeName>
</protein>
<organism>
    <name type="scientific">Homo sapiens</name>
    <name type="common">Human</name>
    <dbReference type="NCBI Taxonomy" id="9606"/>
    <lineage>
        <taxon>Eukaryota</taxon>
        <taxon>Metazoa</taxon>
        <taxon>Chordata</taxon>
        <taxon>Craniata</taxon>
        <taxon>Vertebrata</taxon>
        <taxon>Euteleostomi</taxon>
        <taxon>Mammalia</taxon>
        <taxon>Eutheria</taxon>
        <taxon>Euarchontoglires</taxon>
        <taxon>Primates</taxon>
        <taxon>Haplorrhini</taxon>
        <taxon>Catarrhini</taxon>
        <taxon>Hominidae</taxon>
        <taxon>Homo</taxon>
    </lineage>
</organism>
<name>TCAL4_HUMAN</name>